<dbReference type="EC" id="1.-.-.-" evidence="4 5 6"/>
<dbReference type="EMBL" id="AM920436">
    <property type="protein sequence ID" value="CAP96444.1"/>
    <property type="molecule type" value="Genomic_DNA"/>
</dbReference>
<dbReference type="RefSeq" id="XP_002568557.1">
    <property type="nucleotide sequence ID" value="XM_002568511.1"/>
</dbReference>
<dbReference type="SMR" id="B6HJU5"/>
<dbReference type="STRING" id="500485.B6HJU5"/>
<dbReference type="GlyCosmos" id="B6HJU5">
    <property type="glycosylation" value="3 sites, No reported glycans"/>
</dbReference>
<dbReference type="VEuPathDB" id="FungiDB:PCH_Pc21g15470"/>
<dbReference type="eggNOG" id="KOG0159">
    <property type="taxonomic scope" value="Eukaryota"/>
</dbReference>
<dbReference type="HOGENOM" id="CLU_042557_2_0_1"/>
<dbReference type="OMA" id="QCMGRYV"/>
<dbReference type="OrthoDB" id="2789670at2759"/>
<dbReference type="BioCyc" id="PCHR:PC21G15470-MONOMER"/>
<dbReference type="Proteomes" id="UP000000724">
    <property type="component" value="Contig Pc00c21"/>
</dbReference>
<dbReference type="GO" id="GO:0020037">
    <property type="term" value="F:heme binding"/>
    <property type="evidence" value="ECO:0007669"/>
    <property type="project" value="InterPro"/>
</dbReference>
<dbReference type="GO" id="GO:0005506">
    <property type="term" value="F:iron ion binding"/>
    <property type="evidence" value="ECO:0007669"/>
    <property type="project" value="InterPro"/>
</dbReference>
<dbReference type="GO" id="GO:0004497">
    <property type="term" value="F:monooxygenase activity"/>
    <property type="evidence" value="ECO:0007669"/>
    <property type="project" value="UniProtKB-KW"/>
</dbReference>
<dbReference type="GO" id="GO:0016705">
    <property type="term" value="F:oxidoreductase activity, acting on paired donors, with incorporation or reduction of molecular oxygen"/>
    <property type="evidence" value="ECO:0007669"/>
    <property type="project" value="InterPro"/>
</dbReference>
<dbReference type="GO" id="GO:0043386">
    <property type="term" value="P:mycotoxin biosynthetic process"/>
    <property type="evidence" value="ECO:0007669"/>
    <property type="project" value="UniProtKB-ARBA"/>
</dbReference>
<dbReference type="CDD" id="cd20615">
    <property type="entry name" value="CYP_GliC-like"/>
    <property type="match status" value="1"/>
</dbReference>
<dbReference type="Gene3D" id="1.10.630.10">
    <property type="entry name" value="Cytochrome P450"/>
    <property type="match status" value="1"/>
</dbReference>
<dbReference type="InterPro" id="IPR001128">
    <property type="entry name" value="Cyt_P450"/>
</dbReference>
<dbReference type="InterPro" id="IPR017972">
    <property type="entry name" value="Cyt_P450_CS"/>
</dbReference>
<dbReference type="InterPro" id="IPR036396">
    <property type="entry name" value="Cyt_P450_sf"/>
</dbReference>
<dbReference type="InterPro" id="IPR050121">
    <property type="entry name" value="Cytochrome_P450_monoxygenase"/>
</dbReference>
<dbReference type="PANTHER" id="PTHR24305">
    <property type="entry name" value="CYTOCHROME P450"/>
    <property type="match status" value="1"/>
</dbReference>
<dbReference type="PANTHER" id="PTHR24305:SF235">
    <property type="entry name" value="CYTOCHROME P450 MONOOXYGENASE APDB-RELATED"/>
    <property type="match status" value="1"/>
</dbReference>
<dbReference type="Pfam" id="PF00067">
    <property type="entry name" value="p450"/>
    <property type="match status" value="1"/>
</dbReference>
<dbReference type="SUPFAM" id="SSF48264">
    <property type="entry name" value="Cytochrome P450"/>
    <property type="match status" value="1"/>
</dbReference>
<dbReference type="PROSITE" id="PS00086">
    <property type="entry name" value="CYTOCHROME_P450"/>
    <property type="match status" value="1"/>
</dbReference>
<accession>B6HJU5</accession>
<comment type="function">
    <text evidence="4 5 6">Cytochrome P450 monooxygenase; part of the gene cluster that mediates the biosynthesis of the mycotoxins roquefortine C and meleagrin (PubMed:22118684, PubMed:23776469). The first stage is catalyzed by the dipeptide synthase roqA which condenses histidine and tryptophan to produce histidyltryptophanyldiketopiperazine (HTD) (PubMed:22118684, PubMed:23776469). HTD is then converted to roquefortine C through two possible pathways (PubMed:23776469). In the first pathway, prenyltransferase roqD transforms HTD to the intermediate roquefortine D, which is in turn converted to roquefortine C by the cytochrome P450 monooxygenase roqR (PubMed:23776469). In the second pathway, HTD is first converted to the intermediate dehydrohistidyltryptophanyldi-ketopiperazine (DHTD) by roqR which is then prenylated by roqD to form roquefortine C (PubMed:23776469). Roquefortine C can be further transformed to meleagrin via three more reactions including oxydation to glandicolin A by roqM, which is further reduced to glandicoline B by roqO (PubMed:23776469). Finally, glandicoline B is converted to meleagrin by the glandicoline B O-methyltransferase roqN (PubMed:22118684, PubMed:23776469). More studies identified further branching and additional metabolites produced by the roquefortine/meleagrin cluster, including roquefortine F, roquefortine L, roquefortine M, roquefortine N and neoxaline (PubMed:24225953).</text>
</comment>
<comment type="cofactor">
    <cofactor evidence="1">
        <name>heme</name>
        <dbReference type="ChEBI" id="CHEBI:30413"/>
    </cofactor>
</comment>
<comment type="pathway">
    <text evidence="4 5 6">Alkaloid biosynthesis.</text>
</comment>
<comment type="disruption phenotype">
    <text evidence="4 5">Leads to a reduction of both roquefortine C and meleagrin synthesis (PubMed:22118684, PubMed:23776469). Accumulates HTD and roquefortine D (PubMed:23776469).</text>
</comment>
<comment type="biotechnology">
    <text evidence="7">The indole alkaloid meleagrin was shown to be a good candidate to control c-Met-dependent breast cancer proliferation, migration and invasion (PubMed:26692349).</text>
</comment>
<comment type="similarity">
    <text evidence="9">Belongs to the cytochrome P450 family.</text>
</comment>
<sequence length="511" mass="57767">MSGYVLLTVQLAAVLLLVTLWRAFRPNTRSNRVVSYIINVGNTPKIHQKNKADFHPRTNVEISPLVVPNLFDRWLNAHSDLPLSISRWRGKYQVPGGGERLPILTGADEIKAVFKDSGNHRKASNLNGGWVMGDLVGDGVGLISEGHWKRVHAVVSPPFTQKPTTYVPFVQSRISRHFSELYPEDEGGRTLRIKPAEDLKLLPFWVISDLLYGNLSPEMTEELLQITDLRTDVFRYAFKGGLSLFSISKIFYPDIRNKLHVFHTRWANFNRKAYQCALNRDDASACAIVTLYRAVEQGQITPTELMHTLDEALFANIDVTIGSFSWIPQFLAEDAALQSKLRKEISHARSDTAPESWVKYIGSNSTLLASCINESARLKPVTNYTYAQSMPTDRDVGGYRIPRGTFMVVDTNALNIWDDAWGSDKTSYRPQRFLEESRASFRYRFWRFGFGPRQCIAQALADTILKVLVAYTVENYELKSTGKSAANEEDAHKQGEAWFKVAEQGIILEAL</sequence>
<protein>
    <recommendedName>
        <fullName evidence="9">Cytochrome P450 monooxygenase roqR</fullName>
        <ecNumber evidence="4 5 6">1.-.-.-</ecNumber>
    </recommendedName>
    <alternativeName>
        <fullName evidence="8">Roquefortine/meleagrin synthesis protein R</fullName>
    </alternativeName>
</protein>
<gene>
    <name evidence="8" type="primary">roqR</name>
    <name type="ORF">Pc21g15470</name>
</gene>
<feature type="signal peptide" evidence="2">
    <location>
        <begin position="1"/>
        <end position="23"/>
    </location>
</feature>
<feature type="chain" id="PRO_5002845764" description="Cytochrome P450 monooxygenase roqR">
    <location>
        <begin position="24"/>
        <end position="511"/>
    </location>
</feature>
<feature type="binding site" description="axial binding residue" evidence="1">
    <location>
        <position position="455"/>
    </location>
    <ligand>
        <name>heme</name>
        <dbReference type="ChEBI" id="CHEBI:30413"/>
    </ligand>
    <ligandPart>
        <name>Fe</name>
        <dbReference type="ChEBI" id="CHEBI:18248"/>
    </ligandPart>
</feature>
<feature type="glycosylation site" description="N-linked (GlcNAc...) asparagine" evidence="3">
    <location>
        <position position="364"/>
    </location>
</feature>
<feature type="glycosylation site" description="N-linked (GlcNAc...) asparagine" evidence="3">
    <location>
        <position position="373"/>
    </location>
</feature>
<feature type="glycosylation site" description="N-linked (GlcNAc...) asparagine" evidence="3">
    <location>
        <position position="383"/>
    </location>
</feature>
<name>ROQR_PENRW</name>
<keyword id="KW-0325">Glycoprotein</keyword>
<keyword id="KW-0349">Heme</keyword>
<keyword id="KW-0408">Iron</keyword>
<keyword id="KW-0479">Metal-binding</keyword>
<keyword id="KW-0503">Monooxygenase</keyword>
<keyword id="KW-0560">Oxidoreductase</keyword>
<keyword id="KW-1185">Reference proteome</keyword>
<keyword id="KW-0732">Signal</keyword>
<evidence type="ECO:0000250" key="1">
    <source>
        <dbReference type="UniProtKB" id="P04798"/>
    </source>
</evidence>
<evidence type="ECO:0000255" key="2"/>
<evidence type="ECO:0000255" key="3">
    <source>
        <dbReference type="PROSITE-ProRule" id="PRU00498"/>
    </source>
</evidence>
<evidence type="ECO:0000269" key="4">
    <source>
    </source>
</evidence>
<evidence type="ECO:0000269" key="5">
    <source>
    </source>
</evidence>
<evidence type="ECO:0000269" key="6">
    <source>
    </source>
</evidence>
<evidence type="ECO:0000269" key="7">
    <source>
    </source>
</evidence>
<evidence type="ECO:0000303" key="8">
    <source>
    </source>
</evidence>
<evidence type="ECO:0000305" key="9"/>
<reference key="1">
    <citation type="journal article" date="2008" name="Nat. Biotechnol.">
        <title>Genome sequencing and analysis of the filamentous fungus Penicillium chrysogenum.</title>
        <authorList>
            <person name="van den Berg M.A."/>
            <person name="Albang R."/>
            <person name="Albermann K."/>
            <person name="Badger J.H."/>
            <person name="Daran J.-M."/>
            <person name="Driessen A.J.M."/>
            <person name="Garcia-Estrada C."/>
            <person name="Fedorova N.D."/>
            <person name="Harris D.M."/>
            <person name="Heijne W.H.M."/>
            <person name="Joardar V.S."/>
            <person name="Kiel J.A.K.W."/>
            <person name="Kovalchuk A."/>
            <person name="Martin J.F."/>
            <person name="Nierman W.C."/>
            <person name="Nijland J.G."/>
            <person name="Pronk J.T."/>
            <person name="Roubos J.A."/>
            <person name="van der Klei I.J."/>
            <person name="van Peij N.N.M.E."/>
            <person name="Veenhuis M."/>
            <person name="von Doehren H."/>
            <person name="Wagner C."/>
            <person name="Wortman J.R."/>
            <person name="Bovenberg R.A.L."/>
        </authorList>
    </citation>
    <scope>NUCLEOTIDE SEQUENCE [LARGE SCALE GENOMIC DNA]</scope>
    <source>
        <strain>ATCC 28089 / DSM 1075 / NRRL 1951 / Wisconsin 54-1255</strain>
    </source>
</reference>
<reference key="2">
    <citation type="journal article" date="2011" name="Chem. Biol.">
        <title>A single cluster of coregulated genes encodes the biosynthesis of the mycotoxins roquefortine C and meleagrin in Penicillium chrysogenum.</title>
        <authorList>
            <person name="Garcia-Estrada C."/>
            <person name="Ullan R.V."/>
            <person name="Albillos S.M."/>
            <person name="Fernandez-Bodega M.A."/>
            <person name="Durek P."/>
            <person name="von Doehren H."/>
            <person name="Martin J.F."/>
        </authorList>
    </citation>
    <scope>FUNCTION</scope>
    <scope>DISRUPTION PHENOTYPE</scope>
</reference>
<reference key="3">
    <citation type="journal article" date="2013" name="J. Biol. Chem.">
        <title>Novel key metabolites reveal further branching of the roquefortine/meleagrin biosynthetic pathway.</title>
        <authorList>
            <person name="Ries M.I."/>
            <person name="Ali H."/>
            <person name="Lankhorst P.P."/>
            <person name="Hankemeier T."/>
            <person name="Bovenberg R.A."/>
            <person name="Driessen A.J."/>
            <person name="Vreeken R.J."/>
        </authorList>
    </citation>
    <scope>FUNCTION</scope>
    <scope>CATALYTIC ACTIVITY</scope>
</reference>
<reference key="4">
    <citation type="journal article" date="2013" name="PLoS ONE">
        <title>A branched biosynthetic pathway is involved in production of roquefortine and related compounds in Penicillium chrysogenum.</title>
        <authorList>
            <person name="Ali H."/>
            <person name="Ries M.I."/>
            <person name="Nijland J.G."/>
            <person name="Lankhorst P.P."/>
            <person name="Hankemeier T."/>
            <person name="Bovenberg R.A."/>
            <person name="Vreeken R.J."/>
            <person name="Driessen A.J."/>
        </authorList>
    </citation>
    <scope>FUNCTION</scope>
    <scope>CATALYTIC ACTIVITY</scope>
    <scope>INDUCTION</scope>
    <scope>DISRUPTION PHENOTYPE</scope>
</reference>
<reference key="5">
    <citation type="journal article" date="2016" name="Bioorg. Med. Chem.">
        <title>The indole alkaloid meleagrin, from the olive tree endophytic fungus Penicillium chrysogenum, as a novel lead for the control of c-Met-dependent breast cancer proliferation, migration and invasion.</title>
        <authorList>
            <person name="Mady M.S."/>
            <person name="Mohyeldin M.M."/>
            <person name="Ebrahim H.Y."/>
            <person name="Elsayed H.E."/>
            <person name="Houssen W.E."/>
            <person name="Haggag E.G."/>
            <person name="Soliman R.F."/>
            <person name="El Sayed K.A."/>
        </authorList>
    </citation>
    <scope>BIOTECHNOLOGY</scope>
</reference>
<organism>
    <name type="scientific">Penicillium rubens (strain ATCC 28089 / DSM 1075 / NRRL 1951 / Wisconsin 54-1255)</name>
    <name type="common">Penicillium chrysogenum</name>
    <dbReference type="NCBI Taxonomy" id="500485"/>
    <lineage>
        <taxon>Eukaryota</taxon>
        <taxon>Fungi</taxon>
        <taxon>Dikarya</taxon>
        <taxon>Ascomycota</taxon>
        <taxon>Pezizomycotina</taxon>
        <taxon>Eurotiomycetes</taxon>
        <taxon>Eurotiomycetidae</taxon>
        <taxon>Eurotiales</taxon>
        <taxon>Aspergillaceae</taxon>
        <taxon>Penicillium</taxon>
        <taxon>Penicillium chrysogenum species complex</taxon>
    </lineage>
</organism>
<proteinExistence type="evidence at protein level"/>